<name>DNAG_HYPBU</name>
<dbReference type="EC" id="2.7.7.101" evidence="1"/>
<dbReference type="EMBL" id="CP000493">
    <property type="protein sequence ID" value="ABM80739.1"/>
    <property type="molecule type" value="Genomic_DNA"/>
</dbReference>
<dbReference type="RefSeq" id="WP_011822057.1">
    <property type="nucleotide sequence ID" value="NC_008818.1"/>
</dbReference>
<dbReference type="STRING" id="415426.Hbut_0890"/>
<dbReference type="EnsemblBacteria" id="ABM80739">
    <property type="protein sequence ID" value="ABM80739"/>
    <property type="gene ID" value="Hbut_0890"/>
</dbReference>
<dbReference type="GeneID" id="4782239"/>
<dbReference type="KEGG" id="hbu:Hbut_0890"/>
<dbReference type="eggNOG" id="arCOG04281">
    <property type="taxonomic scope" value="Archaea"/>
</dbReference>
<dbReference type="HOGENOM" id="CLU_034626_0_0_2"/>
<dbReference type="OrthoDB" id="8643at2157"/>
<dbReference type="Proteomes" id="UP000002593">
    <property type="component" value="Chromosome"/>
</dbReference>
<dbReference type="GO" id="GO:0005737">
    <property type="term" value="C:cytoplasm"/>
    <property type="evidence" value="ECO:0007669"/>
    <property type="project" value="TreeGrafter"/>
</dbReference>
<dbReference type="GO" id="GO:0000428">
    <property type="term" value="C:DNA-directed RNA polymerase complex"/>
    <property type="evidence" value="ECO:0007669"/>
    <property type="project" value="UniProtKB-KW"/>
</dbReference>
<dbReference type="GO" id="GO:0000178">
    <property type="term" value="C:exosome (RNase complex)"/>
    <property type="evidence" value="ECO:0007669"/>
    <property type="project" value="UniProtKB-KW"/>
</dbReference>
<dbReference type="GO" id="GO:1990077">
    <property type="term" value="C:primosome complex"/>
    <property type="evidence" value="ECO:0007669"/>
    <property type="project" value="UniProtKB-KW"/>
</dbReference>
<dbReference type="GO" id="GO:0003899">
    <property type="term" value="F:DNA-directed RNA polymerase activity"/>
    <property type="evidence" value="ECO:0007669"/>
    <property type="project" value="InterPro"/>
</dbReference>
<dbReference type="GO" id="GO:0046872">
    <property type="term" value="F:metal ion binding"/>
    <property type="evidence" value="ECO:0007669"/>
    <property type="project" value="UniProtKB-KW"/>
</dbReference>
<dbReference type="GO" id="GO:0008143">
    <property type="term" value="F:poly(A) binding"/>
    <property type="evidence" value="ECO:0007669"/>
    <property type="project" value="InterPro"/>
</dbReference>
<dbReference type="GO" id="GO:0006269">
    <property type="term" value="P:DNA replication, synthesis of primer"/>
    <property type="evidence" value="ECO:0007669"/>
    <property type="project" value="UniProtKB-UniRule"/>
</dbReference>
<dbReference type="CDD" id="cd01029">
    <property type="entry name" value="TOPRIM_primases"/>
    <property type="match status" value="1"/>
</dbReference>
<dbReference type="FunFam" id="3.40.1360.10:FF:000010">
    <property type="entry name" value="DNA primase DnaG"/>
    <property type="match status" value="1"/>
</dbReference>
<dbReference type="Gene3D" id="3.40.1360.10">
    <property type="match status" value="1"/>
</dbReference>
<dbReference type="HAMAP" id="MF_00007">
    <property type="entry name" value="DNA_primase_DnaG_arc"/>
    <property type="match status" value="1"/>
</dbReference>
<dbReference type="InterPro" id="IPR050219">
    <property type="entry name" value="DnaG_primase"/>
</dbReference>
<dbReference type="InterPro" id="IPR020607">
    <property type="entry name" value="Primase_DnaG_arc"/>
</dbReference>
<dbReference type="InterPro" id="IPR034154">
    <property type="entry name" value="TOPRIM_DnaG/twinkle"/>
</dbReference>
<dbReference type="InterPro" id="IPR006171">
    <property type="entry name" value="TOPRIM_dom"/>
</dbReference>
<dbReference type="NCBIfam" id="NF003108">
    <property type="entry name" value="PRK04031.1-1"/>
    <property type="match status" value="1"/>
</dbReference>
<dbReference type="PANTHER" id="PTHR30313">
    <property type="entry name" value="DNA PRIMASE"/>
    <property type="match status" value="1"/>
</dbReference>
<dbReference type="PANTHER" id="PTHR30313:SF2">
    <property type="entry name" value="DNA PRIMASE"/>
    <property type="match status" value="1"/>
</dbReference>
<dbReference type="Pfam" id="PF01751">
    <property type="entry name" value="Toprim"/>
    <property type="match status" value="1"/>
</dbReference>
<dbReference type="SMART" id="SM00493">
    <property type="entry name" value="TOPRIM"/>
    <property type="match status" value="1"/>
</dbReference>
<dbReference type="SUPFAM" id="SSF110455">
    <property type="entry name" value="Toprim domain"/>
    <property type="match status" value="1"/>
</dbReference>
<dbReference type="PROSITE" id="PS50880">
    <property type="entry name" value="TOPRIM"/>
    <property type="match status" value="1"/>
</dbReference>
<proteinExistence type="inferred from homology"/>
<comment type="function">
    <text evidence="1">RNA polymerase that catalyzes the synthesis of short RNA molecules used as primers for DNA polymerase during DNA replication. Also part of the exosome, which is a complex involved in RNA degradation. Acts as a poly(A)-binding protein that enhances the interaction between heteromeric, adenine-rich transcripts and the exosome.</text>
</comment>
<comment type="catalytic activity">
    <reaction evidence="1">
        <text>ssDNA + n NTP = ssDNA/pppN(pN)n-1 hybrid + (n-1) diphosphate.</text>
        <dbReference type="EC" id="2.7.7.101"/>
    </reaction>
</comment>
<comment type="cofactor">
    <cofactor evidence="1">
        <name>Mg(2+)</name>
        <dbReference type="ChEBI" id="CHEBI:18420"/>
    </cofactor>
    <text evidence="1">Binds two Mg(2+) per subunit.</text>
</comment>
<comment type="subunit">
    <text evidence="1">Forms a ternary complex with MCM helicase and DNA. Component of the archaeal exosome complex.</text>
</comment>
<comment type="similarity">
    <text evidence="1">Belongs to the archaeal DnaG primase family.</text>
</comment>
<gene>
    <name evidence="1" type="primary">dnaG</name>
    <name type="ordered locus">Hbut_0890</name>
</gene>
<sequence>MKYLIKAKIEVEGLVDRHDIIGAIFGQTENLFGEEFDLRKLQDRGRIGRVQVDIKHEGTRTIGEVVVPSNLDRVETALVAAMLESVEKVGPYKAQIRVYDIVDVRAQKIKRIVERAKEILRIWSLEKTPDLREVLREISEAVKRAEVIEYGPERLPAGPDVDKSDEIIIVEGRADVINLLRYGYRNVIALEGARGKIPETIIKLAKTKKAIAFVDGDHGGDLILWELLKVADIDYVAKAPPGKEVEELTGKEIARALRNLIPAREYLQILERKFKPKPAVEERPQPPQPQPPAVQPVQPTLQPTVTTVEVVREAKPEKPTVQVEVETFEIPPSVIEEVKKLSGTLEAVLYDSKWNPIERVSVRDVYNVLEKMEPGKVYAVAYDGIVTQRMLDIAAEKQVRLLIANRIGNIEKRPPKVGILTFSDLT</sequence>
<keyword id="KW-0235">DNA replication</keyword>
<keyword id="KW-0240">DNA-directed RNA polymerase</keyword>
<keyword id="KW-0271">Exosome</keyword>
<keyword id="KW-0460">Magnesium</keyword>
<keyword id="KW-0479">Metal-binding</keyword>
<keyword id="KW-0548">Nucleotidyltransferase</keyword>
<keyword id="KW-0639">Primosome</keyword>
<keyword id="KW-1185">Reference proteome</keyword>
<keyword id="KW-0804">Transcription</keyword>
<keyword id="KW-0808">Transferase</keyword>
<evidence type="ECO:0000255" key="1">
    <source>
        <dbReference type="HAMAP-Rule" id="MF_00007"/>
    </source>
</evidence>
<evidence type="ECO:0000256" key="2">
    <source>
        <dbReference type="SAM" id="MobiDB-lite"/>
    </source>
</evidence>
<protein>
    <recommendedName>
        <fullName evidence="1">DNA primase DnaG</fullName>
        <ecNumber evidence="1">2.7.7.101</ecNumber>
    </recommendedName>
</protein>
<accession>A2BL78</accession>
<feature type="chain" id="PRO_0000321490" description="DNA primase DnaG">
    <location>
        <begin position="1"/>
        <end position="426"/>
    </location>
</feature>
<feature type="domain" description="Toprim" evidence="1">
    <location>
        <begin position="165"/>
        <end position="241"/>
    </location>
</feature>
<feature type="region of interest" description="Disordered" evidence="2">
    <location>
        <begin position="278"/>
        <end position="298"/>
    </location>
</feature>
<feature type="compositionally biased region" description="Pro residues" evidence="2">
    <location>
        <begin position="285"/>
        <end position="294"/>
    </location>
</feature>
<feature type="binding site" evidence="1">
    <location>
        <position position="171"/>
    </location>
    <ligand>
        <name>Mg(2+)</name>
        <dbReference type="ChEBI" id="CHEBI:18420"/>
        <label>1</label>
        <note>catalytic</note>
    </ligand>
</feature>
<feature type="binding site" evidence="1">
    <location>
        <position position="215"/>
    </location>
    <ligand>
        <name>Mg(2+)</name>
        <dbReference type="ChEBI" id="CHEBI:18420"/>
        <label>1</label>
        <note>catalytic</note>
    </ligand>
</feature>
<feature type="binding site" evidence="1">
    <location>
        <position position="215"/>
    </location>
    <ligand>
        <name>Mg(2+)</name>
        <dbReference type="ChEBI" id="CHEBI:18420"/>
        <label>2</label>
    </ligand>
</feature>
<feature type="binding site" evidence="1">
    <location>
        <position position="217"/>
    </location>
    <ligand>
        <name>Mg(2+)</name>
        <dbReference type="ChEBI" id="CHEBI:18420"/>
        <label>2</label>
    </ligand>
</feature>
<organism>
    <name type="scientific">Hyperthermus butylicus (strain DSM 5456 / JCM 9403 / PLM1-5)</name>
    <dbReference type="NCBI Taxonomy" id="415426"/>
    <lineage>
        <taxon>Archaea</taxon>
        <taxon>Thermoproteota</taxon>
        <taxon>Thermoprotei</taxon>
        <taxon>Desulfurococcales</taxon>
        <taxon>Pyrodictiaceae</taxon>
        <taxon>Hyperthermus</taxon>
    </lineage>
</organism>
<reference key="1">
    <citation type="journal article" date="2007" name="Archaea">
        <title>The genome of Hyperthermus butylicus: a sulfur-reducing, peptide fermenting, neutrophilic Crenarchaeote growing up to 108 degrees C.</title>
        <authorList>
            <person name="Bruegger K."/>
            <person name="Chen L."/>
            <person name="Stark M."/>
            <person name="Zibat A."/>
            <person name="Redder P."/>
            <person name="Ruepp A."/>
            <person name="Awayez M."/>
            <person name="She Q."/>
            <person name="Garrett R.A."/>
            <person name="Klenk H.-P."/>
        </authorList>
    </citation>
    <scope>NUCLEOTIDE SEQUENCE [LARGE SCALE GENOMIC DNA]</scope>
    <source>
        <strain>DSM 5456 / JCM 9403 / PLM1-5</strain>
    </source>
</reference>